<evidence type="ECO:0000255" key="1">
    <source>
        <dbReference type="HAMAP-Rule" id="MF_00361"/>
    </source>
</evidence>
<accession>B0K9E7</accession>
<organism>
    <name type="scientific">Thermoanaerobacter pseudethanolicus (strain ATCC 33223 / 39E)</name>
    <name type="common">Clostridium thermohydrosulfuricum</name>
    <dbReference type="NCBI Taxonomy" id="340099"/>
    <lineage>
        <taxon>Bacteria</taxon>
        <taxon>Bacillati</taxon>
        <taxon>Bacillota</taxon>
        <taxon>Clostridia</taxon>
        <taxon>Thermoanaerobacterales</taxon>
        <taxon>Thermoanaerobacteraceae</taxon>
        <taxon>Thermoanaerobacter</taxon>
    </lineage>
</organism>
<feature type="chain" id="PRO_1000120894" description="NAD kinase">
    <location>
        <begin position="1"/>
        <end position="283"/>
    </location>
</feature>
<feature type="active site" description="Proton acceptor" evidence="1">
    <location>
        <position position="68"/>
    </location>
</feature>
<feature type="binding site" evidence="1">
    <location>
        <begin position="68"/>
        <end position="69"/>
    </location>
    <ligand>
        <name>NAD(+)</name>
        <dbReference type="ChEBI" id="CHEBI:57540"/>
    </ligand>
</feature>
<feature type="binding site" evidence="1">
    <location>
        <begin position="142"/>
        <end position="143"/>
    </location>
    <ligand>
        <name>NAD(+)</name>
        <dbReference type="ChEBI" id="CHEBI:57540"/>
    </ligand>
</feature>
<feature type="binding site" evidence="1">
    <location>
        <position position="153"/>
    </location>
    <ligand>
        <name>NAD(+)</name>
        <dbReference type="ChEBI" id="CHEBI:57540"/>
    </ligand>
</feature>
<feature type="binding site" evidence="1">
    <location>
        <position position="172"/>
    </location>
    <ligand>
        <name>NAD(+)</name>
        <dbReference type="ChEBI" id="CHEBI:57540"/>
    </ligand>
</feature>
<feature type="binding site" evidence="1">
    <location>
        <begin position="183"/>
        <end position="188"/>
    </location>
    <ligand>
        <name>NAD(+)</name>
        <dbReference type="ChEBI" id="CHEBI:57540"/>
    </ligand>
</feature>
<feature type="binding site" evidence="1">
    <location>
        <position position="242"/>
    </location>
    <ligand>
        <name>NAD(+)</name>
        <dbReference type="ChEBI" id="CHEBI:57540"/>
    </ligand>
</feature>
<keyword id="KW-0067">ATP-binding</keyword>
<keyword id="KW-0963">Cytoplasm</keyword>
<keyword id="KW-0418">Kinase</keyword>
<keyword id="KW-0520">NAD</keyword>
<keyword id="KW-0521">NADP</keyword>
<keyword id="KW-0547">Nucleotide-binding</keyword>
<keyword id="KW-1185">Reference proteome</keyword>
<keyword id="KW-0808">Transferase</keyword>
<name>NADK_THEP3</name>
<reference key="1">
    <citation type="submission" date="2008-01" db="EMBL/GenBank/DDBJ databases">
        <title>Complete sequence of Thermoanaerobacter pseudethanolicus 39E.</title>
        <authorList>
            <person name="Copeland A."/>
            <person name="Lucas S."/>
            <person name="Lapidus A."/>
            <person name="Barry K."/>
            <person name="Glavina del Rio T."/>
            <person name="Dalin E."/>
            <person name="Tice H."/>
            <person name="Pitluck S."/>
            <person name="Bruce D."/>
            <person name="Goodwin L."/>
            <person name="Saunders E."/>
            <person name="Brettin T."/>
            <person name="Detter J.C."/>
            <person name="Han C."/>
            <person name="Schmutz J."/>
            <person name="Larimer F."/>
            <person name="Land M."/>
            <person name="Hauser L."/>
            <person name="Kyrpides N."/>
            <person name="Lykidis A."/>
            <person name="Hemme C."/>
            <person name="Fields M.W."/>
            <person name="He Z."/>
            <person name="Zhou J."/>
            <person name="Richardson P."/>
        </authorList>
    </citation>
    <scope>NUCLEOTIDE SEQUENCE [LARGE SCALE GENOMIC DNA]</scope>
    <source>
        <strain>ATCC 33223 / DSM 2355 / 39E</strain>
    </source>
</reference>
<dbReference type="EC" id="2.7.1.23" evidence="1"/>
<dbReference type="EMBL" id="CP000924">
    <property type="protein sequence ID" value="ABY94760.1"/>
    <property type="molecule type" value="Genomic_DNA"/>
</dbReference>
<dbReference type="RefSeq" id="WP_003868020.1">
    <property type="nucleotide sequence ID" value="NC_010321.1"/>
</dbReference>
<dbReference type="SMR" id="B0K9E7"/>
<dbReference type="STRING" id="340099.Teth39_1105"/>
<dbReference type="KEGG" id="tpd:Teth39_1105"/>
<dbReference type="eggNOG" id="COG0061">
    <property type="taxonomic scope" value="Bacteria"/>
</dbReference>
<dbReference type="HOGENOM" id="CLU_008831_0_1_9"/>
<dbReference type="Proteomes" id="UP000002156">
    <property type="component" value="Chromosome"/>
</dbReference>
<dbReference type="GO" id="GO:0005737">
    <property type="term" value="C:cytoplasm"/>
    <property type="evidence" value="ECO:0007669"/>
    <property type="project" value="UniProtKB-SubCell"/>
</dbReference>
<dbReference type="GO" id="GO:0005524">
    <property type="term" value="F:ATP binding"/>
    <property type="evidence" value="ECO:0007669"/>
    <property type="project" value="UniProtKB-KW"/>
</dbReference>
<dbReference type="GO" id="GO:0046872">
    <property type="term" value="F:metal ion binding"/>
    <property type="evidence" value="ECO:0007669"/>
    <property type="project" value="UniProtKB-UniRule"/>
</dbReference>
<dbReference type="GO" id="GO:0051287">
    <property type="term" value="F:NAD binding"/>
    <property type="evidence" value="ECO:0007669"/>
    <property type="project" value="UniProtKB-ARBA"/>
</dbReference>
<dbReference type="GO" id="GO:0003951">
    <property type="term" value="F:NAD+ kinase activity"/>
    <property type="evidence" value="ECO:0007669"/>
    <property type="project" value="UniProtKB-UniRule"/>
</dbReference>
<dbReference type="GO" id="GO:0019674">
    <property type="term" value="P:NAD metabolic process"/>
    <property type="evidence" value="ECO:0007669"/>
    <property type="project" value="InterPro"/>
</dbReference>
<dbReference type="GO" id="GO:0006741">
    <property type="term" value="P:NADP biosynthetic process"/>
    <property type="evidence" value="ECO:0007669"/>
    <property type="project" value="UniProtKB-UniRule"/>
</dbReference>
<dbReference type="FunFam" id="2.60.200.30:FF:000009">
    <property type="entry name" value="Poly(P)/ATP NAD kinase"/>
    <property type="match status" value="1"/>
</dbReference>
<dbReference type="Gene3D" id="3.40.50.10330">
    <property type="entry name" value="Probable inorganic polyphosphate/atp-NAD kinase, domain 1"/>
    <property type="match status" value="1"/>
</dbReference>
<dbReference type="Gene3D" id="2.60.200.30">
    <property type="entry name" value="Probable inorganic polyphosphate/atp-NAD kinase, domain 2"/>
    <property type="match status" value="1"/>
</dbReference>
<dbReference type="HAMAP" id="MF_00361">
    <property type="entry name" value="NAD_kinase"/>
    <property type="match status" value="1"/>
</dbReference>
<dbReference type="InterPro" id="IPR017438">
    <property type="entry name" value="ATP-NAD_kinase_N"/>
</dbReference>
<dbReference type="InterPro" id="IPR017437">
    <property type="entry name" value="ATP-NAD_kinase_PpnK-typ_C"/>
</dbReference>
<dbReference type="InterPro" id="IPR016064">
    <property type="entry name" value="NAD/diacylglycerol_kinase_sf"/>
</dbReference>
<dbReference type="InterPro" id="IPR002504">
    <property type="entry name" value="NADK"/>
</dbReference>
<dbReference type="PANTHER" id="PTHR20275">
    <property type="entry name" value="NAD KINASE"/>
    <property type="match status" value="1"/>
</dbReference>
<dbReference type="PANTHER" id="PTHR20275:SF0">
    <property type="entry name" value="NAD KINASE"/>
    <property type="match status" value="1"/>
</dbReference>
<dbReference type="Pfam" id="PF01513">
    <property type="entry name" value="NAD_kinase"/>
    <property type="match status" value="1"/>
</dbReference>
<dbReference type="Pfam" id="PF20143">
    <property type="entry name" value="NAD_kinase_C"/>
    <property type="match status" value="1"/>
</dbReference>
<dbReference type="SUPFAM" id="SSF111331">
    <property type="entry name" value="NAD kinase/diacylglycerol kinase-like"/>
    <property type="match status" value="1"/>
</dbReference>
<comment type="function">
    <text evidence="1">Involved in the regulation of the intracellular balance of NAD and NADP, and is a key enzyme in the biosynthesis of NADP. Catalyzes specifically the phosphorylation on 2'-hydroxyl of the adenosine moiety of NAD to yield NADP.</text>
</comment>
<comment type="catalytic activity">
    <reaction evidence="1">
        <text>NAD(+) + ATP = ADP + NADP(+) + H(+)</text>
        <dbReference type="Rhea" id="RHEA:18629"/>
        <dbReference type="ChEBI" id="CHEBI:15378"/>
        <dbReference type="ChEBI" id="CHEBI:30616"/>
        <dbReference type="ChEBI" id="CHEBI:57540"/>
        <dbReference type="ChEBI" id="CHEBI:58349"/>
        <dbReference type="ChEBI" id="CHEBI:456216"/>
        <dbReference type="EC" id="2.7.1.23"/>
    </reaction>
</comment>
<comment type="cofactor">
    <cofactor evidence="1">
        <name>a divalent metal cation</name>
        <dbReference type="ChEBI" id="CHEBI:60240"/>
    </cofactor>
</comment>
<comment type="subcellular location">
    <subcellularLocation>
        <location evidence="1">Cytoplasm</location>
    </subcellularLocation>
</comment>
<comment type="similarity">
    <text evidence="1">Belongs to the NAD kinase family.</text>
</comment>
<sequence>MKKVGVIPNINKDKDLEVTKSVVKWLLEHDSEPYLNEIVASKMGYDEYGKKSTDIYSKSDFIIALGGDGTILNVARLCAPFGTPIFAVNLGHLGFLTEVDMNEVFVSLDKIYKGEYTVEKRMMLEANVVKNDMEIINFRALNDIVITRGAFSRMARINAYVNNNYVDTYLADGVIIATPTGSTAYSLSAGGPIVYPTVEVIIITPICPHTLYSRSIIVSPDDVIRLEISEENQDLMITTDGQQGYKLDYRDIIYIKKSNEYTNLIRVKNTNFFDLLRDKLTER</sequence>
<protein>
    <recommendedName>
        <fullName evidence="1">NAD kinase</fullName>
        <ecNumber evidence="1">2.7.1.23</ecNumber>
    </recommendedName>
    <alternativeName>
        <fullName evidence="1">ATP-dependent NAD kinase</fullName>
    </alternativeName>
</protein>
<gene>
    <name evidence="1" type="primary">nadK</name>
    <name type="ordered locus">Teth39_1105</name>
</gene>
<proteinExistence type="inferred from homology"/>